<dbReference type="EC" id="1.14.11.-" evidence="12 1"/>
<dbReference type="EC" id="1.14.11.51" evidence="12"/>
<dbReference type="EC" id="4.2.99.18" evidence="1"/>
<dbReference type="EC" id="1.14.11.33" evidence="1"/>
<dbReference type="EMBL" id="CT030249">
    <property type="status" value="NOT_ANNOTATED_CDS"/>
    <property type="molecule type" value="Genomic_DNA"/>
</dbReference>
<dbReference type="CCDS" id="CCDS49120.1"/>
<dbReference type="RefSeq" id="NP_001096035.1">
    <property type="nucleotide sequence ID" value="NM_001102565.1"/>
</dbReference>
<dbReference type="PDB" id="6IMA">
    <property type="method" value="X-ray"/>
    <property type="resolution" value="2.59 A"/>
    <property type="chains" value="A/B/C=37-369"/>
</dbReference>
<dbReference type="PDB" id="6IMC">
    <property type="method" value="X-ray"/>
    <property type="resolution" value="2.51 A"/>
    <property type="chains" value="A/B/C/D=1-359"/>
</dbReference>
<dbReference type="PDB" id="6KSF">
    <property type="method" value="X-ray"/>
    <property type="resolution" value="2.40 A"/>
    <property type="chains" value="A=20-355"/>
</dbReference>
<dbReference type="PDB" id="6L94">
    <property type="method" value="X-ray"/>
    <property type="resolution" value="3.10 A"/>
    <property type="chains" value="A=4-389"/>
</dbReference>
<dbReference type="PDBsum" id="6IMA"/>
<dbReference type="PDBsum" id="6IMC"/>
<dbReference type="PDBsum" id="6KSF"/>
<dbReference type="PDBsum" id="6L94"/>
<dbReference type="SMR" id="P0CB42"/>
<dbReference type="FunCoup" id="P0CB42">
    <property type="interactions" value="4928"/>
</dbReference>
<dbReference type="IntAct" id="P0CB42">
    <property type="interactions" value="1"/>
</dbReference>
<dbReference type="STRING" id="10090.ENSMUSP00000124565"/>
<dbReference type="iPTMnet" id="P0CB42"/>
<dbReference type="PhosphoSitePlus" id="P0CB42"/>
<dbReference type="jPOST" id="P0CB42"/>
<dbReference type="PaxDb" id="10090-ENSMUSP00000124565"/>
<dbReference type="ProteomicsDB" id="296396"/>
<dbReference type="Antibodypedia" id="26095">
    <property type="antibodies" value="266 antibodies from 32 providers"/>
</dbReference>
<dbReference type="Ensembl" id="ENSMUST00000162961.8">
    <property type="protein sequence ID" value="ENSMUSP00000124565.2"/>
    <property type="gene ID" value="ENSMUSG00000079036.11"/>
</dbReference>
<dbReference type="GeneID" id="211064"/>
<dbReference type="KEGG" id="mmu:211064"/>
<dbReference type="UCSC" id="uc007oix.1">
    <property type="organism name" value="mouse"/>
</dbReference>
<dbReference type="AGR" id="MGI:2384034"/>
<dbReference type="CTD" id="8846"/>
<dbReference type="MGI" id="MGI:2384034">
    <property type="gene designation" value="Alkbh1"/>
</dbReference>
<dbReference type="VEuPathDB" id="HostDB:ENSMUSG00000079036"/>
<dbReference type="eggNOG" id="KOG2731">
    <property type="taxonomic scope" value="Eukaryota"/>
</dbReference>
<dbReference type="GeneTree" id="ENSGT00390000004599"/>
<dbReference type="HOGENOM" id="CLU_029471_2_1_1"/>
<dbReference type="InParanoid" id="P0CB42"/>
<dbReference type="OMA" id="YKRRDPP"/>
<dbReference type="OrthoDB" id="24353at9989"/>
<dbReference type="PhylomeDB" id="P0CB42"/>
<dbReference type="TreeFam" id="TF314609"/>
<dbReference type="BRENDA" id="1.14.11.51">
    <property type="organism ID" value="3474"/>
</dbReference>
<dbReference type="BioGRID-ORCS" id="211064">
    <property type="hits" value="3 hits in 116 CRISPR screens"/>
</dbReference>
<dbReference type="ChiTaRS" id="Alkbh1">
    <property type="organism name" value="mouse"/>
</dbReference>
<dbReference type="PRO" id="PR:P0CB42"/>
<dbReference type="Proteomes" id="UP000000589">
    <property type="component" value="Chromosome 12"/>
</dbReference>
<dbReference type="RNAct" id="P0CB42">
    <property type="molecule type" value="protein"/>
</dbReference>
<dbReference type="Bgee" id="ENSMUSG00000079036">
    <property type="expression patterns" value="Expressed in humerus cartilage element and 234 other cell types or tissues"/>
</dbReference>
<dbReference type="ExpressionAtlas" id="P0CB42">
    <property type="expression patterns" value="baseline and differential"/>
</dbReference>
<dbReference type="GO" id="GO:0005783">
    <property type="term" value="C:endoplasmic reticulum"/>
    <property type="evidence" value="ECO:0007669"/>
    <property type="project" value="Ensembl"/>
</dbReference>
<dbReference type="GO" id="GO:0000791">
    <property type="term" value="C:euchromatin"/>
    <property type="evidence" value="ECO:0000314"/>
    <property type="project" value="MGI"/>
</dbReference>
<dbReference type="GO" id="GO:0005739">
    <property type="term" value="C:mitochondrion"/>
    <property type="evidence" value="ECO:0000250"/>
    <property type="project" value="UniProtKB"/>
</dbReference>
<dbReference type="GO" id="GO:0005654">
    <property type="term" value="C:nucleoplasm"/>
    <property type="evidence" value="ECO:0007669"/>
    <property type="project" value="Ensembl"/>
</dbReference>
<dbReference type="GO" id="GO:0016706">
    <property type="term" value="F:2-oxoglutarate-dependent dioxygenase activity"/>
    <property type="evidence" value="ECO:0000250"/>
    <property type="project" value="UniProtKB"/>
</dbReference>
<dbReference type="GO" id="GO:0035516">
    <property type="term" value="F:broad specificity oxidative DNA demethylase activity"/>
    <property type="evidence" value="ECO:0000314"/>
    <property type="project" value="UniProtKB"/>
</dbReference>
<dbReference type="GO" id="GO:0042056">
    <property type="term" value="F:chemoattractant activity"/>
    <property type="evidence" value="ECO:0000314"/>
    <property type="project" value="MGI"/>
</dbReference>
<dbReference type="GO" id="GO:0140078">
    <property type="term" value="F:class I DNA-(apurinic or apyrimidinic site) endonuclease activity"/>
    <property type="evidence" value="ECO:0000250"/>
    <property type="project" value="UniProtKB"/>
</dbReference>
<dbReference type="GO" id="GO:0141131">
    <property type="term" value="F:DNA N6-methyladenine demethylase activity"/>
    <property type="evidence" value="ECO:0007669"/>
    <property type="project" value="UniProtKB-EC"/>
</dbReference>
<dbReference type="GO" id="GO:0008198">
    <property type="term" value="F:ferrous iron binding"/>
    <property type="evidence" value="ECO:0000250"/>
    <property type="project" value="UniProtKB"/>
</dbReference>
<dbReference type="GO" id="GO:0035515">
    <property type="term" value="F:oxidative RNA demethylase activity"/>
    <property type="evidence" value="ECO:0000250"/>
    <property type="project" value="UniProtKB"/>
</dbReference>
<dbReference type="GO" id="GO:0000049">
    <property type="term" value="F:tRNA binding"/>
    <property type="evidence" value="ECO:0000250"/>
    <property type="project" value="UniProtKB"/>
</dbReference>
<dbReference type="GO" id="GO:1990984">
    <property type="term" value="F:tRNA demethylase activity"/>
    <property type="evidence" value="ECO:0000250"/>
    <property type="project" value="UniProtKB"/>
</dbReference>
<dbReference type="GO" id="GO:0030154">
    <property type="term" value="P:cell differentiation"/>
    <property type="evidence" value="ECO:0000315"/>
    <property type="project" value="MGI"/>
</dbReference>
<dbReference type="GO" id="GO:0048589">
    <property type="term" value="P:developmental growth"/>
    <property type="evidence" value="ECO:0000315"/>
    <property type="project" value="MGI"/>
</dbReference>
<dbReference type="GO" id="GO:0006281">
    <property type="term" value="P:DNA repair"/>
    <property type="evidence" value="ECO:0007669"/>
    <property type="project" value="UniProtKB-KW"/>
</dbReference>
<dbReference type="GO" id="GO:0001701">
    <property type="term" value="P:in utero embryonic development"/>
    <property type="evidence" value="ECO:0000315"/>
    <property type="project" value="MGI"/>
</dbReference>
<dbReference type="GO" id="GO:0043524">
    <property type="term" value="P:negative regulation of neuron apoptotic process"/>
    <property type="evidence" value="ECO:0000314"/>
    <property type="project" value="MGI"/>
</dbReference>
<dbReference type="GO" id="GO:0001764">
    <property type="term" value="P:neuron migration"/>
    <property type="evidence" value="ECO:0000314"/>
    <property type="project" value="MGI"/>
</dbReference>
<dbReference type="GO" id="GO:0031175">
    <property type="term" value="P:neuron projection development"/>
    <property type="evidence" value="ECO:0000314"/>
    <property type="project" value="MGI"/>
</dbReference>
<dbReference type="GO" id="GO:0035513">
    <property type="term" value="P:oxidative RNA demethylation"/>
    <property type="evidence" value="ECO:0000250"/>
    <property type="project" value="UniProtKB"/>
</dbReference>
<dbReference type="GO" id="GO:0001890">
    <property type="term" value="P:placenta development"/>
    <property type="evidence" value="ECO:0000315"/>
    <property type="project" value="MGI"/>
</dbReference>
<dbReference type="GO" id="GO:0141137">
    <property type="term" value="P:positive regulation of gene expression, epigenetic"/>
    <property type="evidence" value="ECO:0000314"/>
    <property type="project" value="UniProtKB"/>
</dbReference>
<dbReference type="GO" id="GO:0010468">
    <property type="term" value="P:regulation of gene expression"/>
    <property type="evidence" value="ECO:0000315"/>
    <property type="project" value="MGI"/>
</dbReference>
<dbReference type="GO" id="GO:0070129">
    <property type="term" value="P:regulation of mitochondrial translation"/>
    <property type="evidence" value="ECO:0000250"/>
    <property type="project" value="UniProtKB"/>
</dbReference>
<dbReference type="GO" id="GO:0006448">
    <property type="term" value="P:regulation of translational elongation"/>
    <property type="evidence" value="ECO:0007669"/>
    <property type="project" value="Ensembl"/>
</dbReference>
<dbReference type="GO" id="GO:0006446">
    <property type="term" value="P:regulation of translational initiation"/>
    <property type="evidence" value="ECO:0000250"/>
    <property type="project" value="UniProtKB"/>
</dbReference>
<dbReference type="GO" id="GO:1990983">
    <property type="term" value="P:regulation of translational initiation by tRNA modification"/>
    <property type="evidence" value="ECO:0000315"/>
    <property type="project" value="UniProtKB"/>
</dbReference>
<dbReference type="GO" id="GO:0042245">
    <property type="term" value="P:RNA repair"/>
    <property type="evidence" value="ECO:0007669"/>
    <property type="project" value="UniProtKB-KW"/>
</dbReference>
<dbReference type="GO" id="GO:0002101">
    <property type="term" value="P:tRNA wobble cytosine modification"/>
    <property type="evidence" value="ECO:0000250"/>
    <property type="project" value="UniProtKB"/>
</dbReference>
<dbReference type="FunFam" id="2.60.120.590:FF:000006">
    <property type="entry name" value="AlkB homolog 1, histone H2A dioxygenase"/>
    <property type="match status" value="1"/>
</dbReference>
<dbReference type="Gene3D" id="2.60.120.590">
    <property type="entry name" value="Alpha-ketoglutarate-dependent dioxygenase AlkB-like"/>
    <property type="match status" value="1"/>
</dbReference>
<dbReference type="InterPro" id="IPR004574">
    <property type="entry name" value="Alkb"/>
</dbReference>
<dbReference type="InterPro" id="IPR027450">
    <property type="entry name" value="AlkB-like"/>
</dbReference>
<dbReference type="InterPro" id="IPR037151">
    <property type="entry name" value="AlkB-like_sf"/>
</dbReference>
<dbReference type="InterPro" id="IPR005123">
    <property type="entry name" value="Oxoglu/Fe-dep_dioxygenase_dom"/>
</dbReference>
<dbReference type="NCBIfam" id="TIGR00568">
    <property type="entry name" value="alkb"/>
    <property type="match status" value="1"/>
</dbReference>
<dbReference type="PANTHER" id="PTHR16557">
    <property type="entry name" value="ALKYLATED DNA REPAIR PROTEIN ALKB-RELATED"/>
    <property type="match status" value="1"/>
</dbReference>
<dbReference type="PANTHER" id="PTHR16557:SF2">
    <property type="entry name" value="NUCLEIC ACID DIOXYGENASE ALKBH1"/>
    <property type="match status" value="1"/>
</dbReference>
<dbReference type="Pfam" id="PF13532">
    <property type="entry name" value="2OG-FeII_Oxy_2"/>
    <property type="match status" value="1"/>
</dbReference>
<dbReference type="SUPFAM" id="SSF51197">
    <property type="entry name" value="Clavaminate synthase-like"/>
    <property type="match status" value="1"/>
</dbReference>
<dbReference type="PROSITE" id="PS51471">
    <property type="entry name" value="FE2OG_OXY"/>
    <property type="match status" value="1"/>
</dbReference>
<organism>
    <name type="scientific">Mus musculus</name>
    <name type="common">Mouse</name>
    <dbReference type="NCBI Taxonomy" id="10090"/>
    <lineage>
        <taxon>Eukaryota</taxon>
        <taxon>Metazoa</taxon>
        <taxon>Chordata</taxon>
        <taxon>Craniata</taxon>
        <taxon>Vertebrata</taxon>
        <taxon>Euteleostomi</taxon>
        <taxon>Mammalia</taxon>
        <taxon>Eutheria</taxon>
        <taxon>Euarchontoglires</taxon>
        <taxon>Glires</taxon>
        <taxon>Rodentia</taxon>
        <taxon>Myomorpha</taxon>
        <taxon>Muroidea</taxon>
        <taxon>Muridae</taxon>
        <taxon>Murinae</taxon>
        <taxon>Mus</taxon>
        <taxon>Mus</taxon>
    </lineage>
</organism>
<gene>
    <name evidence="13" type="primary">Alkbh1</name>
    <name evidence="1" type="synonym">Abh</name>
    <name type="synonym">Alkbh</name>
</gene>
<feature type="chain" id="PRO_0000386453" description="Nucleic acid dioxygenase ALKBH1">
    <location>
        <begin position="1"/>
        <end position="389"/>
    </location>
</feature>
<feature type="domain" description="Fe2OG dioxygenase" evidence="4">
    <location>
        <begin position="213"/>
        <end position="347"/>
    </location>
</feature>
<feature type="region of interest" description="Interaction with DNAJB6" evidence="5">
    <location>
        <begin position="1"/>
        <end position="127"/>
    </location>
</feature>
<feature type="region of interest" description="tRNA-binding" evidence="1">
    <location>
        <begin position="86"/>
        <end position="389"/>
    </location>
</feature>
<feature type="binding site" evidence="2">
    <location>
        <position position="144"/>
    </location>
    <ligand>
        <name>substrate</name>
    </ligand>
</feature>
<feature type="binding site" evidence="2">
    <location>
        <begin position="175"/>
        <end position="177"/>
    </location>
    <ligand>
        <name>substrate</name>
    </ligand>
</feature>
<feature type="binding site" evidence="3">
    <location>
        <begin position="220"/>
        <end position="222"/>
    </location>
    <ligand>
        <name>2-oxoglutarate</name>
        <dbReference type="ChEBI" id="CHEBI:16810"/>
    </ligand>
</feature>
<feature type="binding site" evidence="4">
    <location>
        <position position="231"/>
    </location>
    <ligand>
        <name>Fe cation</name>
        <dbReference type="ChEBI" id="CHEBI:24875"/>
        <note>catalytic</note>
    </ligand>
</feature>
<feature type="binding site" evidence="4 12">
    <location>
        <position position="233"/>
    </location>
    <ligand>
        <name>Fe cation</name>
        <dbReference type="ChEBI" id="CHEBI:24875"/>
        <note>catalytic</note>
    </ligand>
</feature>
<feature type="binding site" evidence="2">
    <location>
        <position position="233"/>
    </location>
    <ligand>
        <name>substrate</name>
    </ligand>
</feature>
<feature type="binding site" evidence="4">
    <location>
        <position position="287"/>
    </location>
    <ligand>
        <name>Fe cation</name>
        <dbReference type="ChEBI" id="CHEBI:24875"/>
        <note>catalytic</note>
    </ligand>
</feature>
<feature type="binding site" evidence="3">
    <location>
        <begin position="338"/>
        <end position="344"/>
    </location>
    <ligand>
        <name>2-oxoglutarate</name>
        <dbReference type="ChEBI" id="CHEBI:16810"/>
    </ligand>
</feature>
<feature type="mutagenesis site" description="Loss of activity." evidence="9">
    <original>D</original>
    <variation>A</variation>
    <location>
        <position position="233"/>
    </location>
</feature>
<feature type="helix" evidence="16">
    <location>
        <begin position="22"/>
        <end position="31"/>
    </location>
</feature>
<feature type="helix" evidence="15">
    <location>
        <begin position="38"/>
        <end position="40"/>
    </location>
</feature>
<feature type="helix" evidence="16">
    <location>
        <begin position="46"/>
        <end position="48"/>
    </location>
</feature>
<feature type="strand" evidence="16">
    <location>
        <begin position="57"/>
        <end position="59"/>
    </location>
</feature>
<feature type="strand" evidence="16">
    <location>
        <begin position="62"/>
        <end position="64"/>
    </location>
</feature>
<feature type="helix" evidence="16">
    <location>
        <begin position="69"/>
        <end position="71"/>
    </location>
</feature>
<feature type="helix" evidence="16">
    <location>
        <begin position="74"/>
        <end position="79"/>
    </location>
</feature>
<feature type="helix" evidence="16">
    <location>
        <begin position="85"/>
        <end position="87"/>
    </location>
</feature>
<feature type="strand" evidence="16">
    <location>
        <begin position="91"/>
        <end position="93"/>
    </location>
</feature>
<feature type="strand" evidence="16">
    <location>
        <begin position="99"/>
        <end position="102"/>
    </location>
</feature>
<feature type="turn" evidence="16">
    <location>
        <begin position="108"/>
        <end position="110"/>
    </location>
</feature>
<feature type="helix" evidence="16">
    <location>
        <begin position="111"/>
        <end position="119"/>
    </location>
</feature>
<feature type="turn" evidence="16">
    <location>
        <begin position="120"/>
        <end position="123"/>
    </location>
</feature>
<feature type="strand" evidence="16">
    <location>
        <begin position="127"/>
        <end position="129"/>
    </location>
</feature>
<feature type="helix" evidence="16">
    <location>
        <begin position="130"/>
        <end position="133"/>
    </location>
</feature>
<feature type="helix" evidence="16">
    <location>
        <begin position="137"/>
        <end position="140"/>
    </location>
</feature>
<feature type="helix" evidence="16">
    <location>
        <begin position="143"/>
        <end position="152"/>
    </location>
</feature>
<feature type="turn" evidence="16">
    <location>
        <begin position="153"/>
        <end position="157"/>
    </location>
</feature>
<feature type="strand" evidence="14">
    <location>
        <begin position="158"/>
        <end position="160"/>
    </location>
</feature>
<feature type="helix" evidence="16">
    <location>
        <begin position="164"/>
        <end position="167"/>
    </location>
</feature>
<feature type="strand" evidence="16">
    <location>
        <begin position="170"/>
        <end position="178"/>
    </location>
</feature>
<feature type="turn" evidence="16">
    <location>
        <begin position="179"/>
        <end position="182"/>
    </location>
</feature>
<feature type="strand" evidence="16">
    <location>
        <begin position="183"/>
        <end position="190"/>
    </location>
</feature>
<feature type="helix" evidence="16">
    <location>
        <begin position="194"/>
        <end position="206"/>
    </location>
</feature>
<feature type="strand" evidence="16">
    <location>
        <begin position="216"/>
        <end position="222"/>
    </location>
</feature>
<feature type="strand" evidence="16">
    <location>
        <begin position="228"/>
        <end position="231"/>
    </location>
</feature>
<feature type="strand" evidence="16">
    <location>
        <begin position="243"/>
        <end position="250"/>
    </location>
</feature>
<feature type="strand" evidence="16">
    <location>
        <begin position="252"/>
        <end position="256"/>
    </location>
</feature>
<feature type="strand" evidence="16">
    <location>
        <begin position="266"/>
        <end position="270"/>
    </location>
</feature>
<feature type="strand" evidence="16">
    <location>
        <begin position="275"/>
        <end position="278"/>
    </location>
</feature>
<feature type="helix" evidence="16">
    <location>
        <begin position="280"/>
        <end position="284"/>
    </location>
</feature>
<feature type="strand" evidence="16">
    <location>
        <begin position="287"/>
        <end position="292"/>
    </location>
</feature>
<feature type="helix" evidence="16">
    <location>
        <begin position="303"/>
        <end position="306"/>
    </location>
</feature>
<feature type="helix" evidence="16">
    <location>
        <begin position="324"/>
        <end position="334"/>
    </location>
</feature>
<feature type="strand" evidence="16">
    <location>
        <begin position="338"/>
        <end position="344"/>
    </location>
</feature>
<proteinExistence type="evidence at protein level"/>
<comment type="function">
    <text evidence="1 5 8 9 10">Dioxygenase that acts on nucleic acids, such as DNA and tRNA (PubMed:27027282, PubMed:27745969). Requires molecular oxygen, alpha-ketoglutarate and iron (PubMed:27027282). A number of activities have been described for this dioxygenase, but recent results suggest that it mainly acts on tRNAs and mediates their demethylation or oxidation depending on the context and subcellular compartment (By similarity). Mainly acts as a tRNA demethylase by removing N(1)-methyladenine from various tRNAs, with a preference for N(1)-methyladenine at position 58 (m1A58) present on a stem loop structure of tRNAs (PubMed:27745969). Acts as a regulator of translation initiation and elongation in response to glucose deprivation: regulates both translation initiation, by mediating demethylation of tRNA(Met), and translation elongation, N(1)-methyladenine-containing tRNAs being preferentially recruited to polysomes to promote translation elongation (By similarity). In mitochondrion, specifically interacts with mt-tRNA(Met) and mediates oxidation of mt-tRNA(Met) methylated at cytosine(34) to form 5-formylcytosine (f(5)c) at this position (By similarity). mt-tRNA(Met) containing the f(5)c modification at the wobble position enables recognition of the AUA codon in addition to the AUG codon, expanding codon recognition in mitochondrial translation (By similarity). Specifically demethylates DNA methylated on the 6th position of adenine (N(6)-methyladenosine) DNA (PubMed:27027282). N(6)-methyladenosine (m6A) DNA is present at some L1 elements in embryonic stem cells and probably promotes their silencing (PubMed:27027282). Demethylates mRNAs containing N(3)-methylcytidine modification (By similarity). Also able to repair alkylated single-stranded DNA by oxidative demethylation, but with low activity (By similarity). Also has DNA lyase activity and introduces double-stranded breaks at abasic sites: cleaves both single-stranded DNA and double-stranded DNA at abasic sites, with the greatest activity towards double-stranded DNA with two abasic sites (By similarity). DNA lyase activity does not require alpha-ketoglutarate and iron and leads to the formation of an irreversible covalent protein-DNA adduct with the 5' DNA product (By similarity). DNA lyase activity is not required during base excision repair and class switch recombination of the immunoglobulin heavy chain during B lymphocyte activation (PubMed:23825659). May play a role in placental trophoblast lineage differentiation (PubMed:18163532).</text>
</comment>
<comment type="catalytic activity">
    <reaction evidence="12">
        <text>an N(6)-methyl-2'-deoxyadenosine in DNA + 2-oxoglutarate + O2 = a 2'-deoxyadenosine in DNA + formaldehyde + succinate + CO2</text>
        <dbReference type="Rhea" id="RHEA:49524"/>
        <dbReference type="Rhea" id="RHEA-COMP:12418"/>
        <dbReference type="Rhea" id="RHEA-COMP:12419"/>
        <dbReference type="ChEBI" id="CHEBI:15379"/>
        <dbReference type="ChEBI" id="CHEBI:16526"/>
        <dbReference type="ChEBI" id="CHEBI:16810"/>
        <dbReference type="ChEBI" id="CHEBI:16842"/>
        <dbReference type="ChEBI" id="CHEBI:30031"/>
        <dbReference type="ChEBI" id="CHEBI:90615"/>
        <dbReference type="ChEBI" id="CHEBI:90616"/>
        <dbReference type="EC" id="1.14.11.51"/>
    </reaction>
</comment>
<comment type="catalytic activity">
    <reaction evidence="1">
        <text>2'-deoxyribonucleotide-(2'-deoxyribose 5'-phosphate)-2'-deoxyribonucleotide-DNA = a 3'-end 2'-deoxyribonucleotide-(2,3-dehydro-2,3-deoxyribose 5'-phosphate)-DNA + a 5'-end 5'-phospho-2'-deoxyribonucleoside-DNA + H(+)</text>
        <dbReference type="Rhea" id="RHEA:66592"/>
        <dbReference type="Rhea" id="RHEA-COMP:13180"/>
        <dbReference type="Rhea" id="RHEA-COMP:16897"/>
        <dbReference type="Rhea" id="RHEA-COMP:17067"/>
        <dbReference type="ChEBI" id="CHEBI:15378"/>
        <dbReference type="ChEBI" id="CHEBI:136412"/>
        <dbReference type="ChEBI" id="CHEBI:157695"/>
        <dbReference type="ChEBI" id="CHEBI:167181"/>
        <dbReference type="EC" id="4.2.99.18"/>
    </reaction>
</comment>
<comment type="catalytic activity">
    <reaction evidence="1">
        <text>a methylated nucleobase within DNA + 2-oxoglutarate + O2 = a nucleobase within DNA + formaldehyde + succinate + CO2</text>
        <dbReference type="Rhea" id="RHEA:30299"/>
        <dbReference type="Rhea" id="RHEA-COMP:12192"/>
        <dbReference type="Rhea" id="RHEA-COMP:12193"/>
        <dbReference type="ChEBI" id="CHEBI:15379"/>
        <dbReference type="ChEBI" id="CHEBI:16526"/>
        <dbReference type="ChEBI" id="CHEBI:16810"/>
        <dbReference type="ChEBI" id="CHEBI:16842"/>
        <dbReference type="ChEBI" id="CHEBI:30031"/>
        <dbReference type="ChEBI" id="CHEBI:32875"/>
        <dbReference type="ChEBI" id="CHEBI:64428"/>
        <dbReference type="EC" id="1.14.11.33"/>
    </reaction>
</comment>
<comment type="catalytic activity">
    <reaction evidence="1">
        <text>an N(1)-methyladenosine in tRNA + 2-oxoglutarate + O2 = an adenosine in tRNA + formaldehyde + succinate + CO2</text>
        <dbReference type="Rhea" id="RHEA:54576"/>
        <dbReference type="Rhea" id="RHEA-COMP:10242"/>
        <dbReference type="Rhea" id="RHEA-COMP:12312"/>
        <dbReference type="ChEBI" id="CHEBI:15379"/>
        <dbReference type="ChEBI" id="CHEBI:16526"/>
        <dbReference type="ChEBI" id="CHEBI:16810"/>
        <dbReference type="ChEBI" id="CHEBI:16842"/>
        <dbReference type="ChEBI" id="CHEBI:30031"/>
        <dbReference type="ChEBI" id="CHEBI:74411"/>
        <dbReference type="ChEBI" id="CHEBI:74491"/>
    </reaction>
</comment>
<comment type="catalytic activity">
    <reaction evidence="1">
        <text>5-methylcytidine(34) in mitochondrial tRNA(Met) + 2 2-oxoglutarate + 2 O2 = 5-formylcytidine(34) in mitochondrial tRNA(Met) + 2 succinate + 2 CO2 + H2O</text>
        <dbReference type="Rhea" id="RHEA:54144"/>
        <dbReference type="Rhea" id="RHEA-COMP:13808"/>
        <dbReference type="Rhea" id="RHEA-COMP:13809"/>
        <dbReference type="ChEBI" id="CHEBI:15377"/>
        <dbReference type="ChEBI" id="CHEBI:15379"/>
        <dbReference type="ChEBI" id="CHEBI:16526"/>
        <dbReference type="ChEBI" id="CHEBI:16810"/>
        <dbReference type="ChEBI" id="CHEBI:30031"/>
        <dbReference type="ChEBI" id="CHEBI:74483"/>
        <dbReference type="ChEBI" id="CHEBI:138075"/>
    </reaction>
</comment>
<comment type="catalytic activity">
    <reaction evidence="1">
        <text>an N(3)-methylcytidine in mRNA + 2-oxoglutarate + O2 = a cytidine in mRNA + formaldehyde + succinate + CO2</text>
        <dbReference type="Rhea" id="RHEA:60920"/>
        <dbReference type="Rhea" id="RHEA-COMP:15145"/>
        <dbReference type="Rhea" id="RHEA-COMP:15713"/>
        <dbReference type="ChEBI" id="CHEBI:15379"/>
        <dbReference type="ChEBI" id="CHEBI:16526"/>
        <dbReference type="ChEBI" id="CHEBI:16810"/>
        <dbReference type="ChEBI" id="CHEBI:16842"/>
        <dbReference type="ChEBI" id="CHEBI:30031"/>
        <dbReference type="ChEBI" id="CHEBI:74894"/>
        <dbReference type="ChEBI" id="CHEBI:82748"/>
    </reaction>
    <physiologicalReaction direction="left-to-right" evidence="1">
        <dbReference type="Rhea" id="RHEA:60921"/>
    </physiologicalReaction>
</comment>
<comment type="catalytic activity">
    <reaction evidence="10">
        <text>N(1)-methyladenosine(58) in tRNA + 2-oxoglutarate + O2 = adenosine(58) in tRNA + formaldehyde + succinate + CO2</text>
        <dbReference type="Rhea" id="RHEA:79019"/>
        <dbReference type="Rhea" id="RHEA-COMP:10365"/>
        <dbReference type="Rhea" id="RHEA-COMP:10366"/>
        <dbReference type="ChEBI" id="CHEBI:15379"/>
        <dbReference type="ChEBI" id="CHEBI:16526"/>
        <dbReference type="ChEBI" id="CHEBI:16810"/>
        <dbReference type="ChEBI" id="CHEBI:16842"/>
        <dbReference type="ChEBI" id="CHEBI:30031"/>
        <dbReference type="ChEBI" id="CHEBI:74411"/>
        <dbReference type="ChEBI" id="CHEBI:74491"/>
    </reaction>
</comment>
<comment type="cofactor">
    <cofactor evidence="4 9">
        <name>Fe(2+)</name>
        <dbReference type="ChEBI" id="CHEBI:29033"/>
    </cofactor>
    <text evidence="4">Binds 1 Fe(2+) ion per subunit.</text>
</comment>
<comment type="subunit">
    <text evidence="1 5">Monomer (By similarity). Interacts with DNAJB6 (PubMed:18163532).</text>
</comment>
<comment type="interaction">
    <interactant intactId="EBI-13941048">
        <id>P0CB42</id>
    </interactant>
    <interactant intactId="EBI-13941040">
        <id>O54946-2</id>
        <label>Dnajb6</label>
    </interactant>
    <organismsDiffer>false</organismsDiffer>
    <experiments>2</experiments>
</comment>
<comment type="subcellular location">
    <subcellularLocation>
        <location evidence="5">Nucleus</location>
    </subcellularLocation>
    <text evidence="5">Mainly localizes in euchromatin, largely excluded from heterochromatin and nucleoli.</text>
</comment>
<comment type="tissue specificity">
    <text evidence="6">In adult organs, highly expressed in testis, eye, brain and kidney.</text>
</comment>
<comment type="developmental stage">
    <text evidence="5 6">Weak expression throughout the embryo at 8.5 dpc. As the cells migrate and differentiate during organogenesis, expressed in the spinal cord, forebrain and branchial arches at 9.5 dpc, and also in limb buds at 10.5 dpc. Peak expression at 11.5 dpc in the frontonasal process including telencephalon, maxillary, mandibular and hyoid arches, upper and lower limb buds and midbrain and rhombomere 1 roof plates. Expression decreases considerably from 11.5 dpc to 12.5 dpc (PubMed:21072209). At 8.5 dpc is highly expressed in the chorion and the ectoplacental cone. At 10.5 dpc is highly expressed in multiple trophoblast lineages (spongiotrophoblasts, giant cell trophoblasts, glycogen cells, and labyrinthine trophoblasts). The highest placental level is at 9.5 dpc and subsequently decreases until parturition (PubMed:18163532).</text>
</comment>
<comment type="disruption phenotype">
    <text evidence="5 6 9 10">Deficiency results in 80% reduction of the litter size due to embryonic lethality (PubMed:21072209, PubMed:23825659). Surviving pups exhibit a gender bias in favor of males (70% males and 30% females) (PubMed:21072209, PubMed:23825659). Intrauterine growth retardation and placental defects. Altered expression of trophoblast lineage-specific genes (PubMed:18163532). Increased N(6)-methyladenosine (m6A) DNA (PubMed:27027282). No effect on H2AK118 or H2AK119 methylation, suggesting that Alkbh1 does not act as a histone demethylase in vivo (PubMed:27027282). Cells show an strong increase of N(1)-methyladenine-containing tRNAs (PubMed:27745969).</text>
</comment>
<comment type="caution">
    <text evidence="7">H2A histone demethylase activity was observed in vitro (PubMed:22961808). The relevance of such activity is however unclear and additional experimental evidence would be needed to confirm this activity in vivo.</text>
</comment>
<comment type="caution">
    <text evidence="9 10">The DNA N6-methyl adenine demethylase activity is subject to discussion. While DNA N6-methyl adenine demethylase activity was observed by a report (PubMed:27027282). Another group was unable to detect clear DNA N6-methyl adenine demethylase activity in vivo (PubMed:27745969).</text>
</comment>
<sequence>MGKMAAAVASLATLAAEPREDAFRKLFRFYRQSRPGTADLGAVIDFSEAHLARSPKPGVPQVVRFPLNVSSVTERDAERVGLEPVSKWRAYGLEGYPGFIFIPNPFLPGCQRHWVKQCLKLYSQKPNVCNLDKHMTKEETQGLWEQSKEVLRSKEVTKRRPRSLLERLRWVTLGYHYNWDSKKYSADHYTPFPSDLAFLSEQVATACGFQGFQAEAGILNYYRLDSTLGIHVDRSELDHSKPLLSFSFGQSAIFLLGGLKRDEAPTAMFMHSGDIMVMSGFSRLLNHAVPRVLPHPDGECLPHCLETPLPAVLPSNSLVEPCSVEDWQVCATYLRTARVNMTVRQVLATGQDFPLEPVEETKRDIAADGLCHLHDPNSPVKRKRLNPNS</sequence>
<evidence type="ECO:0000250" key="1">
    <source>
        <dbReference type="UniProtKB" id="Q13686"/>
    </source>
</evidence>
<evidence type="ECO:0000250" key="2">
    <source>
        <dbReference type="UniProtKB" id="Q6NS38"/>
    </source>
</evidence>
<evidence type="ECO:0000250" key="3">
    <source>
        <dbReference type="UniProtKB" id="Q96Q83"/>
    </source>
</evidence>
<evidence type="ECO:0000255" key="4">
    <source>
        <dbReference type="PROSITE-ProRule" id="PRU00805"/>
    </source>
</evidence>
<evidence type="ECO:0000269" key="5">
    <source>
    </source>
</evidence>
<evidence type="ECO:0000269" key="6">
    <source>
    </source>
</evidence>
<evidence type="ECO:0000269" key="7">
    <source>
    </source>
</evidence>
<evidence type="ECO:0000269" key="8">
    <source>
    </source>
</evidence>
<evidence type="ECO:0000269" key="9">
    <source>
    </source>
</evidence>
<evidence type="ECO:0000269" key="10">
    <source>
    </source>
</evidence>
<evidence type="ECO:0000305" key="11"/>
<evidence type="ECO:0000305" key="12">
    <source>
    </source>
</evidence>
<evidence type="ECO:0000312" key="13">
    <source>
        <dbReference type="MGI" id="MGI:2384034"/>
    </source>
</evidence>
<evidence type="ECO:0007829" key="14">
    <source>
        <dbReference type="PDB" id="6IMA"/>
    </source>
</evidence>
<evidence type="ECO:0007829" key="15">
    <source>
        <dbReference type="PDB" id="6IMC"/>
    </source>
</evidence>
<evidence type="ECO:0007829" key="16">
    <source>
        <dbReference type="PDB" id="6KSF"/>
    </source>
</evidence>
<keyword id="KW-0002">3D-structure</keyword>
<keyword id="KW-0223">Dioxygenase</keyword>
<keyword id="KW-0227">DNA damage</keyword>
<keyword id="KW-0234">DNA repair</keyword>
<keyword id="KW-0408">Iron</keyword>
<keyword id="KW-0456">Lyase</keyword>
<keyword id="KW-0479">Metal-binding</keyword>
<keyword id="KW-0511">Multifunctional enzyme</keyword>
<keyword id="KW-0539">Nucleus</keyword>
<keyword id="KW-0560">Oxidoreductase</keyword>
<keyword id="KW-1185">Reference proteome</keyword>
<keyword id="KW-0692">RNA repair</keyword>
<keyword id="KW-0804">Transcription</keyword>
<keyword id="KW-0805">Transcription regulation</keyword>
<keyword id="KW-0810">Translation regulation</keyword>
<reference key="1">
    <citation type="journal article" date="2009" name="PLoS Biol.">
        <title>Lineage-specific biology revealed by a finished genome assembly of the mouse.</title>
        <authorList>
            <person name="Church D.M."/>
            <person name="Goodstadt L."/>
            <person name="Hillier L.W."/>
            <person name="Zody M.C."/>
            <person name="Goldstein S."/>
            <person name="She X."/>
            <person name="Bult C.J."/>
            <person name="Agarwala R."/>
            <person name="Cherry J.L."/>
            <person name="DiCuccio M."/>
            <person name="Hlavina W."/>
            <person name="Kapustin Y."/>
            <person name="Meric P."/>
            <person name="Maglott D."/>
            <person name="Birtle Z."/>
            <person name="Marques A.C."/>
            <person name="Graves T."/>
            <person name="Zhou S."/>
            <person name="Teague B."/>
            <person name="Potamousis K."/>
            <person name="Churas C."/>
            <person name="Place M."/>
            <person name="Herschleb J."/>
            <person name="Runnheim R."/>
            <person name="Forrest D."/>
            <person name="Amos-Landgraf J."/>
            <person name="Schwartz D.C."/>
            <person name="Cheng Z."/>
            <person name="Lindblad-Toh K."/>
            <person name="Eichler E.E."/>
            <person name="Ponting C.P."/>
        </authorList>
    </citation>
    <scope>NUCLEOTIDE SEQUENCE [LARGE SCALE GENOMIC DNA]</scope>
    <source>
        <strain>C57BL/6J</strain>
    </source>
</reference>
<reference key="2">
    <citation type="journal article" date="2008" name="Dev. Dyn.">
        <title>Impaired placental trophoblast lineage differentiation in Alkbh1(-/-) mice.</title>
        <authorList>
            <person name="Pan Z."/>
            <person name="Sikandar S."/>
            <person name="Witherspoon M."/>
            <person name="Dizon D."/>
            <person name="Nguyen T."/>
            <person name="Benirschke K."/>
            <person name="Wiley C."/>
            <person name="Vrana P."/>
            <person name="Lipkin S.M."/>
        </authorList>
    </citation>
    <scope>FUNCTION</scope>
    <scope>INTERACTION WITH DNAJB6</scope>
    <scope>SUBCELLULAR LOCATION</scope>
    <scope>DEVELOPMENTAL STAGE</scope>
    <scope>DISRUPTION PHENOTYPE</scope>
</reference>
<reference key="3">
    <citation type="journal article" date="2010" name="PLoS ONE">
        <title>Mice lacking Alkbh1 display sex-ratio distortion and unilateral eye defects.</title>
        <authorList>
            <person name="Nordstrand L.M."/>
            <person name="Svaerd J."/>
            <person name="Larsen E."/>
            <person name="Nilsen A."/>
            <person name="Ougland R."/>
            <person name="Furu K."/>
            <person name="Lien G.F."/>
            <person name="Rognes T."/>
            <person name="Namekawa S.H."/>
            <person name="Lee J.T."/>
            <person name="Klungland A."/>
        </authorList>
    </citation>
    <scope>DISRUPTION PHENOTYPE</scope>
    <scope>DEVELOPMENTAL STAGE</scope>
    <scope>TISSUE SPECIFICITY</scope>
</reference>
<reference key="4">
    <citation type="journal article" date="2012" name="Stem Cells">
        <title>ALKBH1 is a histone H2A dioxygenase involved in neural differentiation.</title>
        <authorList>
            <person name="Ougland R."/>
            <person name="Lando D."/>
            <person name="Jonson I."/>
            <person name="Dahl J.A."/>
            <person name="Moen M.N."/>
            <person name="Nordstrand L.M."/>
            <person name="Rognes T."/>
            <person name="Lee J.T."/>
            <person name="Klungland A."/>
            <person name="Kouzarides T."/>
            <person name="Larsen E."/>
        </authorList>
    </citation>
    <scope>POSSIBLE FUNCTION AS A HISTONE DEMETHYLASE</scope>
</reference>
<reference key="5">
    <citation type="journal article" date="2013" name="PLoS ONE">
        <title>ALKBH1 is dispensable for abasic site cleavage during base excision repair and class switch recombination.</title>
        <authorList>
            <person name="Mueller T.A."/>
            <person name="Yu K."/>
            <person name="Hausinger R.P."/>
            <person name="Meek K."/>
        </authorList>
    </citation>
    <scope>FUNCTION</scope>
</reference>
<reference key="6">
    <citation type="journal article" date="2016" name="Nature">
        <title>DNA methylation on N(6)-adenine in mammalian embryonic stem cells.</title>
        <authorList>
            <person name="Wu T.P."/>
            <person name="Wang T."/>
            <person name="Seetin M.G."/>
            <person name="Lai Y."/>
            <person name="Zhu S."/>
            <person name="Lin K."/>
            <person name="Liu Y."/>
            <person name="Byrum S.D."/>
            <person name="Mackintosh S.G."/>
            <person name="Zhong M."/>
            <person name="Tackett A."/>
            <person name="Wang G."/>
            <person name="Hon L.S."/>
            <person name="Fang G."/>
            <person name="Swenberg J.A."/>
            <person name="Xiao A.Z."/>
        </authorList>
    </citation>
    <scope>FUNCTION</scope>
    <scope>CATALYTIC ACTIVITY</scope>
    <scope>COFACTOR</scope>
    <scope>DISRUPTION PHENOTYPE</scope>
    <scope>MUTAGENESIS OF ASP-233</scope>
</reference>
<reference key="7">
    <citation type="journal article" date="2016" name="Cell">
        <title>ALKBH1-mediated tRNA demethylation regulates translation.</title>
        <authorList>
            <person name="Liu F."/>
            <person name="Clark W."/>
            <person name="Luo G."/>
            <person name="Wang X."/>
            <person name="Fu Y."/>
            <person name="Wei J."/>
            <person name="Wang X."/>
            <person name="Hao Z."/>
            <person name="Dai Q."/>
            <person name="Zheng G."/>
            <person name="Ma H."/>
            <person name="Han D."/>
            <person name="Evans M."/>
            <person name="Klungland A."/>
            <person name="Pan T."/>
            <person name="He C."/>
        </authorList>
    </citation>
    <scope>FUNCTION</scope>
    <scope>DISRUPTION PHENOTYPE</scope>
    <scope>CATALYTIC ACTIVITY</scope>
</reference>
<protein>
    <recommendedName>
        <fullName evidence="11">Nucleic acid dioxygenase ALKBH1</fullName>
        <ecNumber evidence="12">1.14.11.-</ecNumber>
    </recommendedName>
    <alternativeName>
        <fullName>Alkylated DNA repair protein alkB homolog 1</fullName>
    </alternativeName>
    <alternativeName>
        <fullName evidence="1">Alpha-ketoglutarate-dependent dioxygenase ABH1</fullName>
    </alternativeName>
    <alternativeName>
        <fullName evidence="12">DNA 6mA demethylase</fullName>
    </alternativeName>
    <alternativeName>
        <fullName evidence="12">DNA N6-methyl adenine demethylase ALKBH1</fullName>
        <ecNumber evidence="12">1.14.11.51</ecNumber>
    </alternativeName>
    <alternativeName>
        <fullName evidence="1">DNA lyase ABH1</fullName>
        <ecNumber evidence="1">4.2.99.18</ecNumber>
    </alternativeName>
    <alternativeName>
        <fullName>DNA oxidative demethylase ALKBH1</fullName>
        <ecNumber evidence="1">1.14.11.33</ecNumber>
    </alternativeName>
    <alternativeName>
        <fullName evidence="11">mRNA N(3)-methylcytidine demethylase</fullName>
        <ecNumber evidence="1">1.14.11.-</ecNumber>
    </alternativeName>
    <alternativeName>
        <fullName evidence="1">tRNA N1-methyl adenine demethylase</fullName>
        <ecNumber evidence="1">1.14.11.-</ecNumber>
    </alternativeName>
</protein>
<name>ALKB1_MOUSE</name>
<accession>P0CB42</accession>